<proteinExistence type="evidence at protein level"/>
<evidence type="ECO:0000250" key="1">
    <source>
        <dbReference type="UniProtKB" id="P51114"/>
    </source>
</evidence>
<evidence type="ECO:0000250" key="2">
    <source>
        <dbReference type="UniProtKB" id="Q5BJ56"/>
    </source>
</evidence>
<evidence type="ECO:0000250" key="3">
    <source>
        <dbReference type="UniProtKB" id="Q61584"/>
    </source>
</evidence>
<evidence type="ECO:0000255" key="4">
    <source>
        <dbReference type="PROSITE-ProRule" id="PRU00117"/>
    </source>
</evidence>
<evidence type="ECO:0000255" key="5">
    <source>
        <dbReference type="PROSITE-ProRule" id="PRU00973"/>
    </source>
</evidence>
<evidence type="ECO:0000256" key="6">
    <source>
        <dbReference type="SAM" id="MobiDB-lite"/>
    </source>
</evidence>
<evidence type="ECO:0000269" key="7">
    <source>
    </source>
</evidence>
<evidence type="ECO:0000269" key="8">
    <source>
    </source>
</evidence>
<evidence type="ECO:0000303" key="9">
    <source>
    </source>
</evidence>
<evidence type="ECO:0000303" key="10">
    <source>
    </source>
</evidence>
<evidence type="ECO:0000303" key="11">
    <source ref="3"/>
</evidence>
<evidence type="ECO:0000305" key="12"/>
<dbReference type="EMBL" id="U25163">
    <property type="protein sequence ID" value="AAC59682.1"/>
    <property type="molecule type" value="mRNA"/>
</dbReference>
<dbReference type="EMBL" id="DQ083374">
    <property type="protein sequence ID" value="AAY79165.1"/>
    <property type="molecule type" value="mRNA"/>
</dbReference>
<dbReference type="EMBL" id="DQ083375">
    <property type="protein sequence ID" value="AAY79166.1"/>
    <property type="molecule type" value="mRNA"/>
</dbReference>
<dbReference type="EMBL" id="BC073457">
    <property type="protein sequence ID" value="AAH73457.1"/>
    <property type="molecule type" value="mRNA"/>
</dbReference>
<dbReference type="RefSeq" id="NP_001081786.1">
    <molecule id="P51115-1"/>
    <property type="nucleotide sequence ID" value="NM_001088317.1"/>
</dbReference>
<dbReference type="RefSeq" id="XP_018117202.1">
    <molecule id="P51115-1"/>
    <property type="nucleotide sequence ID" value="XM_018261713.1"/>
</dbReference>
<dbReference type="SMR" id="P51115"/>
<dbReference type="DNASU" id="398050"/>
<dbReference type="GeneID" id="398050"/>
<dbReference type="KEGG" id="xla:398050"/>
<dbReference type="AGR" id="Xenbase:XB-GENE-6252042"/>
<dbReference type="CTD" id="398050"/>
<dbReference type="Xenbase" id="XB-GENE-6252042">
    <property type="gene designation" value="fxr1.L"/>
</dbReference>
<dbReference type="OMA" id="WPARITK"/>
<dbReference type="OrthoDB" id="424249at2759"/>
<dbReference type="Proteomes" id="UP000186698">
    <property type="component" value="Chromosome 5L"/>
</dbReference>
<dbReference type="Bgee" id="398050">
    <property type="expression patterns" value="Expressed in muscle tissue and 19 other cell types or tissues"/>
</dbReference>
<dbReference type="GO" id="GO:0005737">
    <property type="term" value="C:cytoplasm"/>
    <property type="evidence" value="ECO:0000250"/>
    <property type="project" value="UniProtKB"/>
</dbReference>
<dbReference type="GO" id="GO:0010494">
    <property type="term" value="C:cytoplasmic stress granule"/>
    <property type="evidence" value="ECO:0000318"/>
    <property type="project" value="GO_Central"/>
</dbReference>
<dbReference type="GO" id="GO:0043232">
    <property type="term" value="C:intracellular membraneless organelle"/>
    <property type="evidence" value="ECO:0000250"/>
    <property type="project" value="UniProtKB"/>
</dbReference>
<dbReference type="GO" id="GO:0043005">
    <property type="term" value="C:neuron projection"/>
    <property type="evidence" value="ECO:0000318"/>
    <property type="project" value="GO_Central"/>
</dbReference>
<dbReference type="GO" id="GO:0005634">
    <property type="term" value="C:nucleus"/>
    <property type="evidence" value="ECO:0000250"/>
    <property type="project" value="UniProtKB"/>
</dbReference>
<dbReference type="GO" id="GO:0098793">
    <property type="term" value="C:presynapse"/>
    <property type="evidence" value="ECO:0007669"/>
    <property type="project" value="GOC"/>
</dbReference>
<dbReference type="GO" id="GO:0140693">
    <property type="term" value="F:molecular condensate scaffold activity"/>
    <property type="evidence" value="ECO:0000250"/>
    <property type="project" value="UniProtKB"/>
</dbReference>
<dbReference type="GO" id="GO:0035925">
    <property type="term" value="F:mRNA 3'-UTR AU-rich region binding"/>
    <property type="evidence" value="ECO:0000250"/>
    <property type="project" value="UniProtKB"/>
</dbReference>
<dbReference type="GO" id="GO:0003730">
    <property type="term" value="F:mRNA 3'-UTR binding"/>
    <property type="evidence" value="ECO:0000318"/>
    <property type="project" value="GO_Central"/>
</dbReference>
<dbReference type="GO" id="GO:0003729">
    <property type="term" value="F:mRNA binding"/>
    <property type="evidence" value="ECO:0000250"/>
    <property type="project" value="UniProtKB"/>
</dbReference>
<dbReference type="GO" id="GO:0046982">
    <property type="term" value="F:protein heterodimerization activity"/>
    <property type="evidence" value="ECO:0000250"/>
    <property type="project" value="UniProtKB"/>
</dbReference>
<dbReference type="GO" id="GO:0042803">
    <property type="term" value="F:protein homodimerization activity"/>
    <property type="evidence" value="ECO:0000250"/>
    <property type="project" value="UniProtKB"/>
</dbReference>
<dbReference type="GO" id="GO:0003723">
    <property type="term" value="F:RNA binding"/>
    <property type="evidence" value="ECO:0000314"/>
    <property type="project" value="UniProtKB"/>
</dbReference>
<dbReference type="GO" id="GO:0033592">
    <property type="term" value="F:RNA strand annealing activity"/>
    <property type="evidence" value="ECO:0000250"/>
    <property type="project" value="UniProtKB"/>
</dbReference>
<dbReference type="GO" id="GO:0045182">
    <property type="term" value="F:translation regulator activity"/>
    <property type="evidence" value="ECO:0000318"/>
    <property type="project" value="GO_Central"/>
</dbReference>
<dbReference type="GO" id="GO:0048513">
    <property type="term" value="P:animal organ development"/>
    <property type="evidence" value="ECO:0000318"/>
    <property type="project" value="GO_Central"/>
</dbReference>
<dbReference type="GO" id="GO:0021542">
    <property type="term" value="P:dentate gyrus development"/>
    <property type="evidence" value="ECO:0000250"/>
    <property type="project" value="UniProtKB"/>
</dbReference>
<dbReference type="GO" id="GO:0140694">
    <property type="term" value="P:membraneless organelle assembly"/>
    <property type="evidence" value="ECO:0000250"/>
    <property type="project" value="UniProtKB"/>
</dbReference>
<dbReference type="GO" id="GO:0030901">
    <property type="term" value="P:midbrain development"/>
    <property type="evidence" value="ECO:0000314"/>
    <property type="project" value="Xenbase"/>
</dbReference>
<dbReference type="GO" id="GO:0061157">
    <property type="term" value="P:mRNA destabilization"/>
    <property type="evidence" value="ECO:0000250"/>
    <property type="project" value="UniProtKB"/>
</dbReference>
<dbReference type="GO" id="GO:0051028">
    <property type="term" value="P:mRNA transport"/>
    <property type="evidence" value="ECO:0000318"/>
    <property type="project" value="GO_Central"/>
</dbReference>
<dbReference type="GO" id="GO:0007517">
    <property type="term" value="P:muscle organ development"/>
    <property type="evidence" value="ECO:0000314"/>
    <property type="project" value="UniProtKB"/>
</dbReference>
<dbReference type="GO" id="GO:0061061">
    <property type="term" value="P:muscle structure development"/>
    <property type="evidence" value="ECO:0000315"/>
    <property type="project" value="Xenbase"/>
</dbReference>
<dbReference type="GO" id="GO:0050728">
    <property type="term" value="P:negative regulation of inflammatory response"/>
    <property type="evidence" value="ECO:0000250"/>
    <property type="project" value="UniProtKB"/>
</dbReference>
<dbReference type="GO" id="GO:1900272">
    <property type="term" value="P:negative regulation of long-term synaptic potentiation"/>
    <property type="evidence" value="ECO:0000250"/>
    <property type="project" value="UniProtKB"/>
</dbReference>
<dbReference type="GO" id="GO:0017148">
    <property type="term" value="P:negative regulation of translation"/>
    <property type="evidence" value="ECO:0000250"/>
    <property type="project" value="UniProtKB"/>
</dbReference>
<dbReference type="GO" id="GO:0032720">
    <property type="term" value="P:negative regulation of tumor necrosis factor production"/>
    <property type="evidence" value="ECO:0000250"/>
    <property type="project" value="UniProtKB"/>
</dbReference>
<dbReference type="GO" id="GO:0061351">
    <property type="term" value="P:neural precursor cell proliferation"/>
    <property type="evidence" value="ECO:0000315"/>
    <property type="project" value="Xenbase"/>
</dbReference>
<dbReference type="GO" id="GO:0048170">
    <property type="term" value="P:positive regulation of long-term neuronal synaptic plasticity"/>
    <property type="evidence" value="ECO:0000318"/>
    <property type="project" value="GO_Central"/>
</dbReference>
<dbReference type="GO" id="GO:2000637">
    <property type="term" value="P:positive regulation of miRNA-mediated gene silencing"/>
    <property type="evidence" value="ECO:0000250"/>
    <property type="project" value="UniProtKB"/>
</dbReference>
<dbReference type="GO" id="GO:0045727">
    <property type="term" value="P:positive regulation of translation"/>
    <property type="evidence" value="ECO:0000250"/>
    <property type="project" value="UniProtKB"/>
</dbReference>
<dbReference type="GO" id="GO:0010608">
    <property type="term" value="P:post-transcriptional regulation of gene expression"/>
    <property type="evidence" value="ECO:0000250"/>
    <property type="project" value="UniProtKB"/>
</dbReference>
<dbReference type="GO" id="GO:0043488">
    <property type="term" value="P:regulation of mRNA stability"/>
    <property type="evidence" value="ECO:0000318"/>
    <property type="project" value="GO_Central"/>
</dbReference>
<dbReference type="GO" id="GO:0050767">
    <property type="term" value="P:regulation of neurogenesis"/>
    <property type="evidence" value="ECO:0000250"/>
    <property type="project" value="UniProtKB"/>
</dbReference>
<dbReference type="GO" id="GO:0051966">
    <property type="term" value="P:regulation of synaptic transmission, glutamatergic"/>
    <property type="evidence" value="ECO:0000250"/>
    <property type="project" value="UniProtKB"/>
</dbReference>
<dbReference type="GO" id="GO:0099577">
    <property type="term" value="P:regulation of translation at presynapse, modulating synaptic transmission"/>
    <property type="evidence" value="ECO:0000318"/>
    <property type="project" value="GO_Central"/>
</dbReference>
<dbReference type="GO" id="GO:0061053">
    <property type="term" value="P:somite development"/>
    <property type="evidence" value="ECO:0000315"/>
    <property type="project" value="UniProtKB"/>
</dbReference>
<dbReference type="GO" id="GO:0007286">
    <property type="term" value="P:spermatid development"/>
    <property type="evidence" value="ECO:0000250"/>
    <property type="project" value="UniProtKB"/>
</dbReference>
<dbReference type="CDD" id="cd22504">
    <property type="entry name" value="KH_I_FXR1_rpt1"/>
    <property type="match status" value="1"/>
</dbReference>
<dbReference type="CDD" id="cd22507">
    <property type="entry name" value="KH_I_FXR1_rpt2"/>
    <property type="match status" value="1"/>
</dbReference>
<dbReference type="CDD" id="cd22510">
    <property type="entry name" value="KH_I_FXR1_rpt3"/>
    <property type="match status" value="1"/>
</dbReference>
<dbReference type="CDD" id="cd20472">
    <property type="entry name" value="Tudor_Agenet_FXR1_rpt1"/>
    <property type="match status" value="1"/>
</dbReference>
<dbReference type="CDD" id="cd20475">
    <property type="entry name" value="Tudor_Agenet_FXR1_rpt2"/>
    <property type="match status" value="1"/>
</dbReference>
<dbReference type="FunFam" id="2.30.30.140:FF:000001">
    <property type="entry name" value="Fragile X mental retardation 1, isoform CRA_e"/>
    <property type="match status" value="1"/>
</dbReference>
<dbReference type="FunFam" id="2.30.30.140:FF:000002">
    <property type="entry name" value="Fragile X mental retardation 1, isoform CRA_e"/>
    <property type="match status" value="1"/>
</dbReference>
<dbReference type="FunFam" id="3.30.1370.10:FF:000004">
    <property type="entry name" value="Fragile X mental retardation 1, isoform CRA_e"/>
    <property type="match status" value="1"/>
</dbReference>
<dbReference type="FunFam" id="3.30.1370.10:FF:000017">
    <property type="entry name" value="Fragile X mental retardation syndrome-related protein 1"/>
    <property type="match status" value="1"/>
</dbReference>
<dbReference type="Gene3D" id="2.30.30.140">
    <property type="match status" value="2"/>
</dbReference>
<dbReference type="Gene3D" id="3.30.1370.10">
    <property type="entry name" value="K Homology domain, type 1"/>
    <property type="match status" value="2"/>
</dbReference>
<dbReference type="InterPro" id="IPR008395">
    <property type="entry name" value="Agenet-like_dom"/>
</dbReference>
<dbReference type="InterPro" id="IPR040148">
    <property type="entry name" value="FMR1"/>
</dbReference>
<dbReference type="InterPro" id="IPR022034">
    <property type="entry name" value="FMR1-like_C_core"/>
</dbReference>
<dbReference type="InterPro" id="IPR040472">
    <property type="entry name" value="FMRP_KH0"/>
</dbReference>
<dbReference type="InterPro" id="IPR032172">
    <property type="entry name" value="FXR1_C1"/>
</dbReference>
<dbReference type="InterPro" id="IPR032177">
    <property type="entry name" value="FXR_C3"/>
</dbReference>
<dbReference type="InterPro" id="IPR004087">
    <property type="entry name" value="KH_dom"/>
</dbReference>
<dbReference type="InterPro" id="IPR004088">
    <property type="entry name" value="KH_dom_type_1"/>
</dbReference>
<dbReference type="InterPro" id="IPR036612">
    <property type="entry name" value="KH_dom_type_1_sf"/>
</dbReference>
<dbReference type="InterPro" id="IPR047494">
    <property type="entry name" value="KH_I_FXR1_rpt1"/>
</dbReference>
<dbReference type="InterPro" id="IPR047495">
    <property type="entry name" value="KH_I_FXR1_rpt2"/>
</dbReference>
<dbReference type="InterPro" id="IPR047496">
    <property type="entry name" value="KH_I_FXR1_rpt3"/>
</dbReference>
<dbReference type="InterPro" id="IPR047425">
    <property type="entry name" value="Tudor_Agenet_FXR1_rpt1"/>
</dbReference>
<dbReference type="InterPro" id="IPR047427">
    <property type="entry name" value="Tudor_Agenet_FXR1_rpt2"/>
</dbReference>
<dbReference type="InterPro" id="IPR041560">
    <property type="entry name" value="Tudor_FRM1"/>
</dbReference>
<dbReference type="PANTHER" id="PTHR10603">
    <property type="entry name" value="FRAGILE X MENTAL RETARDATION SYNDROME-RELATED PROTEIN"/>
    <property type="match status" value="1"/>
</dbReference>
<dbReference type="PANTHER" id="PTHR10603:SF6">
    <property type="entry name" value="RNA-BINDING PROTEIN FXR1"/>
    <property type="match status" value="1"/>
</dbReference>
<dbReference type="Pfam" id="PF05641">
    <property type="entry name" value="Agenet"/>
    <property type="match status" value="1"/>
</dbReference>
<dbReference type="Pfam" id="PF12235">
    <property type="entry name" value="FXMRP1_C_core"/>
    <property type="match status" value="1"/>
</dbReference>
<dbReference type="Pfam" id="PF16096">
    <property type="entry name" value="FXR_C1"/>
    <property type="match status" value="1"/>
</dbReference>
<dbReference type="Pfam" id="PF16097">
    <property type="entry name" value="FXR_C3"/>
    <property type="match status" value="1"/>
</dbReference>
<dbReference type="Pfam" id="PF00013">
    <property type="entry name" value="KH_1"/>
    <property type="match status" value="2"/>
</dbReference>
<dbReference type="Pfam" id="PF17904">
    <property type="entry name" value="KH_9"/>
    <property type="match status" value="1"/>
</dbReference>
<dbReference type="Pfam" id="PF18336">
    <property type="entry name" value="Tudor_FRX1"/>
    <property type="match status" value="1"/>
</dbReference>
<dbReference type="SMART" id="SM00322">
    <property type="entry name" value="KH"/>
    <property type="match status" value="2"/>
</dbReference>
<dbReference type="SUPFAM" id="SSF54791">
    <property type="entry name" value="Eukaryotic type KH-domain (KH-domain type I)"/>
    <property type="match status" value="2"/>
</dbReference>
<dbReference type="PROSITE" id="PS51641">
    <property type="entry name" value="AGENET_LIKE"/>
    <property type="match status" value="2"/>
</dbReference>
<dbReference type="PROSITE" id="PS50084">
    <property type="entry name" value="KH_TYPE_1"/>
    <property type="match status" value="2"/>
</dbReference>
<organism>
    <name type="scientific">Xenopus laevis</name>
    <name type="common">African clawed frog</name>
    <dbReference type="NCBI Taxonomy" id="8355"/>
    <lineage>
        <taxon>Eukaryota</taxon>
        <taxon>Metazoa</taxon>
        <taxon>Chordata</taxon>
        <taxon>Craniata</taxon>
        <taxon>Vertebrata</taxon>
        <taxon>Euteleostomi</taxon>
        <taxon>Amphibia</taxon>
        <taxon>Batrachia</taxon>
        <taxon>Anura</taxon>
        <taxon>Pipoidea</taxon>
        <taxon>Pipidae</taxon>
        <taxon>Xenopodinae</taxon>
        <taxon>Xenopus</taxon>
        <taxon>Xenopus</taxon>
    </lineage>
</organism>
<reference key="1">
    <citation type="journal article" date="1995" name="EMBO J.">
        <title>FXR1, an autosomal homolog of the fragile X mental retardation gene.</title>
        <authorList>
            <person name="Siomi M.C."/>
            <person name="Siomi H."/>
            <person name="Sauer W.H."/>
            <person name="Srinivasan S."/>
            <person name="Nussbaum R.L."/>
            <person name="Dreyfuss G."/>
        </authorList>
    </citation>
    <scope>NUCLEOTIDE SEQUENCE [MRNA] (ISOFORM 2)</scope>
    <scope>RNA-BINDING</scope>
    <source>
        <tissue>Ovary</tissue>
    </source>
</reference>
<reference key="2">
    <citation type="journal article" date="2005" name="Mol. Biol. Cell">
        <title>The RNA-binding protein Fragile X-related 1 regulates somite formation in Xenopus laevis.</title>
        <authorList>
            <person name="Huot M.-E."/>
            <person name="Bisson N."/>
            <person name="Davidovic L."/>
            <person name="Mazroui R."/>
            <person name="Labelle Y."/>
            <person name="Moss T."/>
            <person name="Khandjian E.W."/>
        </authorList>
    </citation>
    <scope>NUCLEOTIDE SEQUENCE [MRNA] (ISOFORMS 1 AND 2)</scope>
    <scope>FUNCTION</scope>
    <scope>TISSUE SPECIFICITY</scope>
    <source>
        <tissue>Embryonic tail</tissue>
    </source>
</reference>
<reference key="3">
    <citation type="submission" date="2004-06" db="EMBL/GenBank/DDBJ databases">
        <authorList>
            <consortium name="NIH - Xenopus Gene Collection (XGC) project"/>
        </authorList>
    </citation>
    <scope>NUCLEOTIDE SEQUENCE [LARGE SCALE MRNA] (ISOFORM 3)</scope>
    <source>
        <tissue>Embryo</tissue>
    </source>
</reference>
<reference key="4">
    <citation type="journal article" date="2020" name="J. Cell Biol.">
        <title>FXR1 splicing is important for muscle development and biomolecular condensates in muscle cells.</title>
        <authorList>
            <person name="Smith J.A."/>
            <person name="Curry E.G."/>
            <person name="Blue R.E."/>
            <person name="Roden C."/>
            <person name="Dundon S.E.R."/>
            <person name="Rodriguez-Vargas A."/>
            <person name="Jordan D.C."/>
            <person name="Chen X."/>
            <person name="Lyons S.M."/>
            <person name="Crutchley J."/>
            <person name="Anderson P."/>
            <person name="Horb M.E."/>
            <person name="Gladfelter A.S."/>
            <person name="Giudice J."/>
        </authorList>
    </citation>
    <scope>FUNCTION (ISOFORMS 1 AND 2)</scope>
</reference>
<protein>
    <recommendedName>
        <fullName evidence="12">RNA-binding protein fxr1-A</fullName>
    </recommendedName>
    <alternativeName>
        <fullName>xFxr1p-A</fullName>
    </alternativeName>
</protein>
<keyword id="KW-0025">Alternative splicing</keyword>
<keyword id="KW-0963">Cytoplasm</keyword>
<keyword id="KW-0217">Developmental protein</keyword>
<keyword id="KW-0221">Differentiation</keyword>
<keyword id="KW-0517">Myogenesis</keyword>
<keyword id="KW-1185">Reference proteome</keyword>
<keyword id="KW-0677">Repeat</keyword>
<keyword id="KW-0694">RNA-binding</keyword>
<name>FXR1A_XENLA</name>
<accession>P51115</accession>
<accession>Q4PJJ9</accession>
<accession>Q6GNP7</accession>
<comment type="function">
    <text evidence="1 3 7">mRNA-binding protein that acts as a regulator of mRNAs translation and/or stability, and which is required for various processes, such as neurogenesis and muscle development (PubMed:16000371). Specifically binds to AU-rich elements (AREs) in the 3'-UTR of target mRNAs (By similarity). Promotes formation of some phase-separated membraneless compartment by undergoing liquid-liquid phase separation upon binding to AREs-containing mRNAs, leading to assemble mRNAs into cytoplasmic ribonucleoprotein granules that concentrate mRNAs with associated regulatory factors (By similarity). Forms a cytoplasmic messenger ribonucleoprotein (mRNP) network by packaging long mRNAs, serving as a scaffold that recruits proteins and signaling molecules. This network facilitates signaling reactions by maintaining proximity between kinases and substrates, crucial for processes like actomyosin reorganization (By similarity).</text>
</comment>
<comment type="function">
    <molecule>Isoform 1</molecule>
    <text evidence="8">Required for somite formation by undergoing liquid-liquid phase separation to assemble target mRNAs into cytoplasmic ribonucleoprotein granules.</text>
</comment>
<comment type="function">
    <molecule>Isoform 2</molecule>
    <text evidence="8">Not involved in somite development.</text>
</comment>
<comment type="subcellular location">
    <subcellularLocation>
        <location evidence="3">Cytoplasm</location>
        <location evidence="3">Cytoplasmic ribonucleoprotein granule</location>
    </subcellularLocation>
    <subcellularLocation>
        <location evidence="1">Cytoplasm</location>
        <location evidence="1">Stress granule</location>
    </subcellularLocation>
    <subcellularLocation>
        <location evidence="2">Cytoplasm</location>
    </subcellularLocation>
    <text evidence="3">Specifically localizes to cytoplasmic ribonucleoprotein membraneless compartments.</text>
</comment>
<comment type="alternative products">
    <event type="alternative splicing"/>
    <isoform>
        <id>P51115-1</id>
        <name>1</name>
        <name>Long</name>
        <sequence type="displayed"/>
    </isoform>
    <isoform>
        <id>P51115-2</id>
        <name>2</name>
        <sequence type="described" ref="VSP_019707"/>
    </isoform>
    <isoform>
        <id>P51115-3</id>
        <name>3</name>
        <sequence type="described" ref="VSP_019706 VSP_019708"/>
    </isoform>
</comment>
<comment type="tissue specificity">
    <molecule>Isoform 1</molecule>
    <text evidence="7">During embryogenesis, isoform 1 is first present after stage 30 (PubMed:16000371). In the tadpole (stage 36), isoform 1 shows high expression in somites forming the caudal muscle and low expression in the eye (PubMed:16000371). In adults, isoform 1 is expressed in heart and muscle (PubMed:16000371).</text>
</comment>
<comment type="tissue specificity">
    <molecule>Isoform 2</molecule>
    <text evidence="7">During embryogenesis, isoform 2 is present from fertilization (stage 0) (PubMed:16000371). In adults, isoform 2 is expressed in the brain, liver and kidney (PubMed:16000371).</text>
</comment>
<comment type="domain">
    <text evidence="3">Disordered region at the C-terminus undergoes liquid-liquid phase separation (LLPS) for the formation of a membraneless compartment that stores mRNAs.</text>
</comment>
<comment type="domain">
    <text evidence="1">CC1 and CC2 domains are required for homodimerization and FXR1-network nucleation. CC domains also mediate interaction with other proteins containing similar CC domains.</text>
</comment>
<comment type="similarity">
    <text evidence="12">Belongs to the FMR1 family.</text>
</comment>
<feature type="chain" id="PRO_0000050108" description="RNA-binding protein fxr1-A">
    <location>
        <begin position="1"/>
        <end position="676"/>
    </location>
</feature>
<feature type="domain" description="Agenet-like 1" evidence="5">
    <location>
        <begin position="4"/>
        <end position="50"/>
    </location>
</feature>
<feature type="domain" description="Agenet-like 2" evidence="5">
    <location>
        <begin position="63"/>
        <end position="115"/>
    </location>
</feature>
<feature type="domain" description="KH 1" evidence="4">
    <location>
        <begin position="222"/>
        <end position="251"/>
    </location>
</feature>
<feature type="domain" description="KH 2" evidence="4">
    <location>
        <begin position="285"/>
        <end position="314"/>
    </location>
</feature>
<feature type="region of interest" description="CC1 domain" evidence="1">
    <location>
        <begin position="201"/>
        <end position="208"/>
    </location>
</feature>
<feature type="region of interest" description="CC2 domain" evidence="1">
    <location>
        <begin position="353"/>
        <end position="379"/>
    </location>
</feature>
<feature type="region of interest" description="Disordered" evidence="6">
    <location>
        <begin position="380"/>
        <end position="676"/>
    </location>
</feature>
<feature type="region of interest" description="RNA-binding RGG-box">
    <location>
        <begin position="471"/>
        <end position="486"/>
    </location>
</feature>
<feature type="compositionally biased region" description="Low complexity" evidence="6">
    <location>
        <begin position="404"/>
        <end position="414"/>
    </location>
</feature>
<feature type="compositionally biased region" description="Polar residues" evidence="6">
    <location>
        <begin position="423"/>
        <end position="439"/>
    </location>
</feature>
<feature type="compositionally biased region" description="Gly residues" evidence="6">
    <location>
        <begin position="474"/>
        <end position="489"/>
    </location>
</feature>
<feature type="compositionally biased region" description="Acidic residues" evidence="6">
    <location>
        <begin position="512"/>
        <end position="522"/>
    </location>
</feature>
<feature type="compositionally biased region" description="Basic residues" evidence="6">
    <location>
        <begin position="528"/>
        <end position="538"/>
    </location>
</feature>
<feature type="compositionally biased region" description="Basic residues" evidence="6">
    <location>
        <begin position="571"/>
        <end position="582"/>
    </location>
</feature>
<feature type="compositionally biased region" description="Basic and acidic residues" evidence="6">
    <location>
        <begin position="609"/>
        <end position="632"/>
    </location>
</feature>
<feature type="compositionally biased region" description="Polar residues" evidence="6">
    <location>
        <begin position="645"/>
        <end position="665"/>
    </location>
</feature>
<feature type="splice variant" id="VSP_019707" description="In isoform 2." evidence="9 10">
    <location>
        <begin position="564"/>
        <end position="590"/>
    </location>
</feature>
<feature type="splice variant" id="VSP_019706" description="In isoform 3." evidence="11">
    <original>DDSEQKPQRRN</original>
    <variation>GQYMRTIVHYR</variation>
    <location>
        <begin position="564"/>
        <end position="574"/>
    </location>
</feature>
<feature type="splice variant" id="VSP_019708" description="In isoform 3." evidence="11">
    <location>
        <begin position="575"/>
        <end position="676"/>
    </location>
</feature>
<feature type="sequence conflict" description="In Ref. 1; AAC59682." evidence="12" ref="1">
    <original>V</original>
    <variation>A</variation>
    <location>
        <position position="84"/>
    </location>
</feature>
<feature type="sequence conflict" description="In Ref. 1; AAC59682." evidence="12" ref="1">
    <original>A</original>
    <variation>R</variation>
    <location>
        <position position="218"/>
    </location>
</feature>
<feature type="sequence conflict" description="In Ref. 1; AAC59682." evidence="12" ref="1">
    <original>G</original>
    <variation>R</variation>
    <location>
        <position position="312"/>
    </location>
</feature>
<feature type="sequence conflict" description="In Ref. 1; AAC59682." evidence="12" ref="1">
    <original>S</original>
    <variation>L</variation>
    <location>
        <position position="553"/>
    </location>
</feature>
<feature type="sequence conflict" description="In Ref. 1; AAC59682." evidence="12" ref="1">
    <location>
        <position position="645"/>
    </location>
</feature>
<sequence>MEDMTVEVRGSNGAFYKGFVKDVHEDSLTVVFENNWQPERQVPFDEVRMPPLPDIKKEITEGDEVEVYSRANDQEPCGWWLAKVRMMKGEFYVIEYAACDATYNEIVTFERLRPVNQNKTVTKNSFFKCTVDVPEDLRESCSNENVHKEFKKAVGACRVYFHAETNQLIILSACESTVKRVNILSDMHLRSIRTKLMLMSRNEEATKHLECTKQLASAFHEEFIVREDLMGLAIGTHGSNIQQARKVPGITAIELDEDSGTFRIYGESAEAVKKARSYLEFVEDFIQVPRNLVGKVIGKNGKVIQEIVDKSGVVRVRIEGDNETKLPREDGMVPFVFVGTKENIGNVQVLLEYHIAYLKEVEQLRMERLQIDEQLRQIGMGFRPSSSRGTEKEKGYATDESTASSVRGSRSYSGRGRGRRGPNYTSGYGTNSELSNPSETESERKEELSDWSLAGEDERESRQQRDSRRRPGGRGRSGSAGRGRGGSRGGKSSISSVLKDPDSNPYSLLDNTESDQTADTDASESHHNTNRRRRSRRRRTDEDSSLMDGMTESDNASVNENGLDDSEQKPQRRNRSRRRRFRGQAEDRQPVTVADYISRAESQSRQRNLPKETLAKGKKEKVKDVIEEHGPSEKVINGPRASSADKASNPQTASTERNQASCQDGSKQEAIMNGVS</sequence>
<gene>
    <name type="primary">fxr1-a</name>
</gene>